<keyword id="KW-0687">Ribonucleoprotein</keyword>
<keyword id="KW-0689">Ribosomal protein</keyword>
<keyword id="KW-0694">RNA-binding</keyword>
<keyword id="KW-0699">rRNA-binding</keyword>
<reference key="1">
    <citation type="journal article" date="2012" name="BMC Microbiol.">
        <title>Genome sequence of Desulfitobacterium hafniense DCB-2, a Gram-positive anaerobe capable of dehalogenation and metal reduction.</title>
        <authorList>
            <person name="Kim S.H."/>
            <person name="Harzman C."/>
            <person name="Davis J.K."/>
            <person name="Hutcheson R."/>
            <person name="Broderick J.B."/>
            <person name="Marsh T.L."/>
            <person name="Tiedje J.M."/>
        </authorList>
    </citation>
    <scope>NUCLEOTIDE SEQUENCE [LARGE SCALE GENOMIC DNA]</scope>
    <source>
        <strain>DSM 10664 / DCB-2</strain>
    </source>
</reference>
<organism>
    <name type="scientific">Desulfitobacterium hafniense (strain DSM 10664 / DCB-2)</name>
    <dbReference type="NCBI Taxonomy" id="272564"/>
    <lineage>
        <taxon>Bacteria</taxon>
        <taxon>Bacillati</taxon>
        <taxon>Bacillota</taxon>
        <taxon>Clostridia</taxon>
        <taxon>Eubacteriales</taxon>
        <taxon>Desulfitobacteriaceae</taxon>
        <taxon>Desulfitobacterium</taxon>
    </lineage>
</organism>
<feature type="chain" id="PRO_1000194240" description="Small ribosomal subunit protein bS20">
    <location>
        <begin position="1"/>
        <end position="90"/>
    </location>
</feature>
<evidence type="ECO:0000255" key="1">
    <source>
        <dbReference type="HAMAP-Rule" id="MF_00500"/>
    </source>
</evidence>
<evidence type="ECO:0000305" key="2"/>
<name>RS20_DESHD</name>
<sequence>MPNIKSAIKRVEIAKVRTIKNAAAKSTLRTTIRRFEESLSTDAETAKLALNKATRALDKASSKGLVHKNTAARKKSRLTKRYAKQFAQVG</sequence>
<dbReference type="EMBL" id="CP001336">
    <property type="protein sequence ID" value="ACL22320.1"/>
    <property type="molecule type" value="Genomic_DNA"/>
</dbReference>
<dbReference type="RefSeq" id="WP_005816503.1">
    <property type="nucleotide sequence ID" value="NC_011830.1"/>
</dbReference>
<dbReference type="SMR" id="B8FUQ0"/>
<dbReference type="KEGG" id="dhd:Dhaf_4315"/>
<dbReference type="HOGENOM" id="CLU_160655_1_0_9"/>
<dbReference type="Proteomes" id="UP000007726">
    <property type="component" value="Chromosome"/>
</dbReference>
<dbReference type="GO" id="GO:0005829">
    <property type="term" value="C:cytosol"/>
    <property type="evidence" value="ECO:0007669"/>
    <property type="project" value="TreeGrafter"/>
</dbReference>
<dbReference type="GO" id="GO:0015935">
    <property type="term" value="C:small ribosomal subunit"/>
    <property type="evidence" value="ECO:0007669"/>
    <property type="project" value="TreeGrafter"/>
</dbReference>
<dbReference type="GO" id="GO:0070181">
    <property type="term" value="F:small ribosomal subunit rRNA binding"/>
    <property type="evidence" value="ECO:0007669"/>
    <property type="project" value="TreeGrafter"/>
</dbReference>
<dbReference type="GO" id="GO:0003735">
    <property type="term" value="F:structural constituent of ribosome"/>
    <property type="evidence" value="ECO:0007669"/>
    <property type="project" value="InterPro"/>
</dbReference>
<dbReference type="GO" id="GO:0006412">
    <property type="term" value="P:translation"/>
    <property type="evidence" value="ECO:0007669"/>
    <property type="project" value="UniProtKB-UniRule"/>
</dbReference>
<dbReference type="FunFam" id="1.20.58.110:FF:000001">
    <property type="entry name" value="30S ribosomal protein S20"/>
    <property type="match status" value="1"/>
</dbReference>
<dbReference type="Gene3D" id="1.20.58.110">
    <property type="entry name" value="Ribosomal protein S20"/>
    <property type="match status" value="1"/>
</dbReference>
<dbReference type="HAMAP" id="MF_00500">
    <property type="entry name" value="Ribosomal_bS20"/>
    <property type="match status" value="1"/>
</dbReference>
<dbReference type="InterPro" id="IPR002583">
    <property type="entry name" value="Ribosomal_bS20"/>
</dbReference>
<dbReference type="InterPro" id="IPR036510">
    <property type="entry name" value="Ribosomal_bS20_sf"/>
</dbReference>
<dbReference type="NCBIfam" id="TIGR00029">
    <property type="entry name" value="S20"/>
    <property type="match status" value="1"/>
</dbReference>
<dbReference type="PANTHER" id="PTHR33398">
    <property type="entry name" value="30S RIBOSOMAL PROTEIN S20"/>
    <property type="match status" value="1"/>
</dbReference>
<dbReference type="PANTHER" id="PTHR33398:SF1">
    <property type="entry name" value="SMALL RIBOSOMAL SUBUNIT PROTEIN BS20C"/>
    <property type="match status" value="1"/>
</dbReference>
<dbReference type="Pfam" id="PF01649">
    <property type="entry name" value="Ribosomal_S20p"/>
    <property type="match status" value="1"/>
</dbReference>
<dbReference type="SUPFAM" id="SSF46992">
    <property type="entry name" value="Ribosomal protein S20"/>
    <property type="match status" value="1"/>
</dbReference>
<protein>
    <recommendedName>
        <fullName evidence="1">Small ribosomal subunit protein bS20</fullName>
    </recommendedName>
    <alternativeName>
        <fullName evidence="2">30S ribosomal protein S20</fullName>
    </alternativeName>
</protein>
<comment type="function">
    <text evidence="1">Binds directly to 16S ribosomal RNA.</text>
</comment>
<comment type="similarity">
    <text evidence="1">Belongs to the bacterial ribosomal protein bS20 family.</text>
</comment>
<accession>B8FUQ0</accession>
<gene>
    <name evidence="1" type="primary">rpsT</name>
    <name type="ordered locus">Dhaf_4315</name>
</gene>
<proteinExistence type="inferred from homology"/>